<reference key="1">
    <citation type="journal article" date="2003" name="Nature">
        <title>Genome divergence in two Prochlorococcus ecotypes reflects oceanic niche differentiation.</title>
        <authorList>
            <person name="Rocap G."/>
            <person name="Larimer F.W."/>
            <person name="Lamerdin J.E."/>
            <person name="Malfatti S."/>
            <person name="Chain P."/>
            <person name="Ahlgren N.A."/>
            <person name="Arellano A."/>
            <person name="Coleman M."/>
            <person name="Hauser L."/>
            <person name="Hess W.R."/>
            <person name="Johnson Z.I."/>
            <person name="Land M.L."/>
            <person name="Lindell D."/>
            <person name="Post A.F."/>
            <person name="Regala W."/>
            <person name="Shah M."/>
            <person name="Shaw S.L."/>
            <person name="Steglich C."/>
            <person name="Sullivan M.B."/>
            <person name="Ting C.S."/>
            <person name="Tolonen A."/>
            <person name="Webb E.A."/>
            <person name="Zinser E.R."/>
            <person name="Chisholm S.W."/>
        </authorList>
    </citation>
    <scope>NUCLEOTIDE SEQUENCE [LARGE SCALE GENOMIC DNA]</scope>
    <source>
        <strain>MIT 9313</strain>
    </source>
</reference>
<organism>
    <name type="scientific">Prochlorococcus marinus (strain MIT 9313)</name>
    <dbReference type="NCBI Taxonomy" id="74547"/>
    <lineage>
        <taxon>Bacteria</taxon>
        <taxon>Bacillati</taxon>
        <taxon>Cyanobacteriota</taxon>
        <taxon>Cyanophyceae</taxon>
        <taxon>Synechococcales</taxon>
        <taxon>Prochlorococcaceae</taxon>
        <taxon>Prochlorococcus</taxon>
    </lineage>
</organism>
<keyword id="KW-0004">4Fe-4S</keyword>
<keyword id="KW-0067">ATP-binding</keyword>
<keyword id="KW-0149">Chlorophyll biosynthesis</keyword>
<keyword id="KW-0408">Iron</keyword>
<keyword id="KW-0411">Iron-sulfur</keyword>
<keyword id="KW-0479">Metal-binding</keyword>
<keyword id="KW-0547">Nucleotide-binding</keyword>
<keyword id="KW-0560">Oxidoreductase</keyword>
<keyword id="KW-0602">Photosynthesis</keyword>
<keyword id="KW-1185">Reference proteome</keyword>
<proteinExistence type="inferred from homology"/>
<comment type="function">
    <text evidence="1">Component of the dark-operative protochlorophyllide reductase (DPOR) that uses Mg-ATP and reduced ferredoxin to reduce ring D of protochlorophyllide (Pchlide) to form chlorophyllide a (Chlide). This reaction is light-independent. The NB-protein (ChlN-ChlB) is the catalytic component of the complex.</text>
</comment>
<comment type="catalytic activity">
    <reaction evidence="1">
        <text>chlorophyllide a + oxidized 2[4Fe-4S]-[ferredoxin] + 2 ADP + 2 phosphate = protochlorophyllide a + reduced 2[4Fe-4S]-[ferredoxin] + 2 ATP + 2 H2O</text>
        <dbReference type="Rhea" id="RHEA:28202"/>
        <dbReference type="Rhea" id="RHEA-COMP:10002"/>
        <dbReference type="Rhea" id="RHEA-COMP:10004"/>
        <dbReference type="ChEBI" id="CHEBI:15377"/>
        <dbReference type="ChEBI" id="CHEBI:30616"/>
        <dbReference type="ChEBI" id="CHEBI:33722"/>
        <dbReference type="ChEBI" id="CHEBI:33723"/>
        <dbReference type="ChEBI" id="CHEBI:43474"/>
        <dbReference type="ChEBI" id="CHEBI:83348"/>
        <dbReference type="ChEBI" id="CHEBI:83350"/>
        <dbReference type="ChEBI" id="CHEBI:456216"/>
        <dbReference type="EC" id="1.3.7.7"/>
    </reaction>
</comment>
<comment type="cofactor">
    <cofactor evidence="1">
        <name>[4Fe-4S] cluster</name>
        <dbReference type="ChEBI" id="CHEBI:49883"/>
    </cofactor>
    <text evidence="1">Binds 1 [4Fe-4S] cluster per heterodimer. The cluster is bound at the heterodimer interface by residues from both subunits.</text>
</comment>
<comment type="pathway">
    <text evidence="1">Porphyrin-containing compound metabolism; chlorophyll biosynthesis (light-independent).</text>
</comment>
<comment type="subunit">
    <text evidence="1">Protochlorophyllide reductase is composed of three subunits; ChlL, ChlN and ChlB. Forms a heterotetramer of two ChlB and two ChlN subunits.</text>
</comment>
<comment type="similarity">
    <text evidence="1">Belongs to the ChlB/BchB/BchZ family.</text>
</comment>
<sequence length="536" mass="59164">MELTLWTYEGPPHVGAMRIASSMEGVHYVLHAPQGDTYADLLFTMIERRGRRPPVTYTTFQARDLGGDTAELVKGHLHEAVERFNPEALLVGESCTAELIQDQPGSLASGMGFNMPVVGIELPAYSKKENWGASETFYQLVRGILSKQPSEQSGVSHSPAAWKSQGRRPRVNLLGPTLLGFRCRDDILELEKLLNQHGIDVHVVAPLEARPADLMRLPNADLNVCLYPEIAEATCLWLERNYGMPFSKTVPIGVGATKDFLEELHQLLEMPAPNPGEGAEQSRLPWYSQSVDSNYLTGKRVFIFGDGTHALAAARIADQELGFKVVGLGTYSREMARPVRAAAKELGLEALISDDYLAVEAAMAEAAPELVLGTQMERHSAKRLGIPCAVISTPMHVQDVPARYSPQMGWEGANVIFDSWVHPLMMGLEEHLIGMFRHDFEFVDGHQSHLGHLGGHQSQTEQQQSQAATNPSTQSNADSSSEESPLWTPEGEAELAKIPFFVRGKVRRNTEKYARQAGCRCIDSETVYDAKVHFRA</sequence>
<name>CHLB_PROMM</name>
<evidence type="ECO:0000255" key="1">
    <source>
        <dbReference type="HAMAP-Rule" id="MF_00353"/>
    </source>
</evidence>
<evidence type="ECO:0000256" key="2">
    <source>
        <dbReference type="SAM" id="MobiDB-lite"/>
    </source>
</evidence>
<gene>
    <name evidence="1" type="primary">chlB</name>
    <name type="ordered locus">PMT_1216</name>
</gene>
<feature type="chain" id="PRO_1000048412" description="Light-independent protochlorophyllide reductase subunit B">
    <location>
        <begin position="1"/>
        <end position="536"/>
    </location>
</feature>
<feature type="region of interest" description="Disordered" evidence="2">
    <location>
        <begin position="448"/>
        <end position="489"/>
    </location>
</feature>
<feature type="compositionally biased region" description="Low complexity" evidence="2">
    <location>
        <begin position="448"/>
        <end position="469"/>
    </location>
</feature>
<feature type="compositionally biased region" description="Polar residues" evidence="2">
    <location>
        <begin position="470"/>
        <end position="483"/>
    </location>
</feature>
<feature type="active site" description="Proton donor" evidence="1">
    <location>
        <position position="292"/>
    </location>
</feature>
<feature type="binding site" evidence="1">
    <location>
        <position position="36"/>
    </location>
    <ligand>
        <name>[4Fe-4S] cluster</name>
        <dbReference type="ChEBI" id="CHEBI:49883"/>
        <note>ligand shared with heterodimeric partner</note>
    </ligand>
</feature>
<feature type="binding site" evidence="1">
    <location>
        <begin position="427"/>
        <end position="428"/>
    </location>
    <ligand>
        <name>substrate</name>
    </ligand>
</feature>
<dbReference type="EC" id="1.3.7.7" evidence="1"/>
<dbReference type="EMBL" id="BX548175">
    <property type="protein sequence ID" value="CAE21391.1"/>
    <property type="molecule type" value="Genomic_DNA"/>
</dbReference>
<dbReference type="RefSeq" id="WP_011130586.1">
    <property type="nucleotide sequence ID" value="NC_005071.1"/>
</dbReference>
<dbReference type="SMR" id="Q7V6E8"/>
<dbReference type="KEGG" id="pmt:PMT_1216"/>
<dbReference type="eggNOG" id="COG2710">
    <property type="taxonomic scope" value="Bacteria"/>
</dbReference>
<dbReference type="HOGENOM" id="CLU_025470_0_0_3"/>
<dbReference type="OrthoDB" id="5717231at2"/>
<dbReference type="UniPathway" id="UPA00670"/>
<dbReference type="Proteomes" id="UP000001423">
    <property type="component" value="Chromosome"/>
</dbReference>
<dbReference type="GO" id="GO:0051539">
    <property type="term" value="F:4 iron, 4 sulfur cluster binding"/>
    <property type="evidence" value="ECO:0007669"/>
    <property type="project" value="UniProtKB-UniRule"/>
</dbReference>
<dbReference type="GO" id="GO:0005524">
    <property type="term" value="F:ATP binding"/>
    <property type="evidence" value="ECO:0007669"/>
    <property type="project" value="UniProtKB-UniRule"/>
</dbReference>
<dbReference type="GO" id="GO:0046872">
    <property type="term" value="F:metal ion binding"/>
    <property type="evidence" value="ECO:0007669"/>
    <property type="project" value="UniProtKB-KW"/>
</dbReference>
<dbReference type="GO" id="GO:0016730">
    <property type="term" value="F:oxidoreductase activity, acting on iron-sulfur proteins as donors"/>
    <property type="evidence" value="ECO:0007669"/>
    <property type="project" value="InterPro"/>
</dbReference>
<dbReference type="GO" id="GO:0016636">
    <property type="term" value="F:oxidoreductase activity, acting on the CH-CH group of donors, iron-sulfur protein as acceptor"/>
    <property type="evidence" value="ECO:0007669"/>
    <property type="project" value="UniProtKB-UniRule"/>
</dbReference>
<dbReference type="GO" id="GO:0036068">
    <property type="term" value="P:light-independent chlorophyll biosynthetic process"/>
    <property type="evidence" value="ECO:0007669"/>
    <property type="project" value="UniProtKB-UniRule"/>
</dbReference>
<dbReference type="GO" id="GO:0019685">
    <property type="term" value="P:photosynthesis, dark reaction"/>
    <property type="evidence" value="ECO:0007669"/>
    <property type="project" value="InterPro"/>
</dbReference>
<dbReference type="Gene3D" id="1.20.89.20">
    <property type="match status" value="1"/>
</dbReference>
<dbReference type="Gene3D" id="3.40.50.1980">
    <property type="entry name" value="Nitrogenase molybdenum iron protein domain"/>
    <property type="match status" value="3"/>
</dbReference>
<dbReference type="Gene3D" id="1.10.8.550">
    <property type="entry name" value="Proto-chlorophyllide reductase 57 kD subunit B"/>
    <property type="match status" value="1"/>
</dbReference>
<dbReference type="HAMAP" id="MF_00353">
    <property type="entry name" value="ChlB_BchB"/>
    <property type="match status" value="1"/>
</dbReference>
<dbReference type="InterPro" id="IPR050152">
    <property type="entry name" value="ChlB/BchB/BchZ"/>
</dbReference>
<dbReference type="InterPro" id="IPR013580">
    <property type="entry name" value="LI-POR_suB-like_C"/>
</dbReference>
<dbReference type="InterPro" id="IPR000510">
    <property type="entry name" value="Nase/OxRdtase_comp1"/>
</dbReference>
<dbReference type="InterPro" id="IPR042298">
    <property type="entry name" value="P-CP_red_C"/>
</dbReference>
<dbReference type="InterPro" id="IPR005969">
    <property type="entry name" value="Protochl_reductB"/>
</dbReference>
<dbReference type="InterPro" id="IPR016209">
    <property type="entry name" value="Protochlorophyllide_Rdtase"/>
</dbReference>
<dbReference type="NCBIfam" id="TIGR01278">
    <property type="entry name" value="DPOR_BchB"/>
    <property type="match status" value="1"/>
</dbReference>
<dbReference type="NCBIfam" id="NF002790">
    <property type="entry name" value="PRK02910.1-4"/>
    <property type="match status" value="1"/>
</dbReference>
<dbReference type="PANTHER" id="PTHR33712">
    <property type="entry name" value="LIGHT-INDEPENDENT PROTOCHLOROPHYLLIDE REDUCTASE SUBUNIT B"/>
    <property type="match status" value="1"/>
</dbReference>
<dbReference type="PANTHER" id="PTHR33712:SF7">
    <property type="entry name" value="LIGHT-INDEPENDENT PROTOCHLOROPHYLLIDE REDUCTASE SUBUNIT B"/>
    <property type="match status" value="1"/>
</dbReference>
<dbReference type="Pfam" id="PF00148">
    <property type="entry name" value="Oxidored_nitro"/>
    <property type="match status" value="1"/>
</dbReference>
<dbReference type="Pfam" id="PF08369">
    <property type="entry name" value="PCP_red"/>
    <property type="match status" value="1"/>
</dbReference>
<dbReference type="PIRSF" id="PIRSF000163">
    <property type="entry name" value="PCP_ChlB"/>
    <property type="match status" value="1"/>
</dbReference>
<dbReference type="SUPFAM" id="SSF53807">
    <property type="entry name" value="Helical backbone' metal receptor"/>
    <property type="match status" value="1"/>
</dbReference>
<protein>
    <recommendedName>
        <fullName evidence="1">Light-independent protochlorophyllide reductase subunit B</fullName>
        <shortName evidence="1">DPOR subunit B</shortName>
        <shortName evidence="1">LI-POR subunit B</shortName>
        <ecNumber evidence="1">1.3.7.7</ecNumber>
    </recommendedName>
</protein>
<accession>Q7V6E8</accession>